<sequence length="57" mass="6514">MAVPKKRTSISKKRIRKNFWKKKGYFAAVKAFSLAKSVSTGQSKSFFVRQTSNKSLE</sequence>
<geneLocation type="chloroplast"/>
<feature type="chain" id="PRO_0000296603" description="Large ribosomal subunit protein bL32c">
    <location>
        <begin position="1"/>
        <end position="57"/>
    </location>
</feature>
<comment type="subcellular location">
    <subcellularLocation>
        <location>Plastid</location>
        <location>Chloroplast</location>
    </subcellularLocation>
</comment>
<comment type="similarity">
    <text evidence="1">Belongs to the bacterial ribosomal protein bL32 family.</text>
</comment>
<evidence type="ECO:0000255" key="1">
    <source>
        <dbReference type="HAMAP-Rule" id="MF_00340"/>
    </source>
</evidence>
<evidence type="ECO:0000305" key="2"/>
<accession>Q3V4Y6</accession>
<gene>
    <name evidence="1" type="primary">rpl32</name>
</gene>
<proteinExistence type="inferred from homology"/>
<name>RK32_ACOCL</name>
<reference key="1">
    <citation type="journal article" date="2005" name="Mol. Biol. Evol.">
        <title>Analysis of Acorus calamus chloroplast genome and its phylogenetic implications.</title>
        <authorList>
            <person name="Goremykin V.V."/>
            <person name="Holland B."/>
            <person name="Hirsch-Ernst K.I."/>
            <person name="Hellwig F.H."/>
        </authorList>
    </citation>
    <scope>NUCLEOTIDE SEQUENCE [LARGE SCALE GENOMIC DNA]</scope>
</reference>
<organism>
    <name type="scientific">Acorus calamus</name>
    <name type="common">Sweet flag</name>
    <dbReference type="NCBI Taxonomy" id="4465"/>
    <lineage>
        <taxon>Eukaryota</taxon>
        <taxon>Viridiplantae</taxon>
        <taxon>Streptophyta</taxon>
        <taxon>Embryophyta</taxon>
        <taxon>Tracheophyta</taxon>
        <taxon>Spermatophyta</taxon>
        <taxon>Magnoliopsida</taxon>
        <taxon>Liliopsida</taxon>
        <taxon>Acoraceae</taxon>
        <taxon>Acorus</taxon>
    </lineage>
</organism>
<keyword id="KW-0150">Chloroplast</keyword>
<keyword id="KW-0934">Plastid</keyword>
<keyword id="KW-0687">Ribonucleoprotein</keyword>
<keyword id="KW-0689">Ribosomal protein</keyword>
<protein>
    <recommendedName>
        <fullName evidence="1">Large ribosomal subunit protein bL32c</fullName>
    </recommendedName>
    <alternativeName>
        <fullName evidence="2">50S ribosomal protein L32, chloroplastic</fullName>
    </alternativeName>
</protein>
<dbReference type="EMBL" id="AJ879453">
    <property type="protein sequence ID" value="CAI53842.1"/>
    <property type="molecule type" value="Genomic_DNA"/>
</dbReference>
<dbReference type="RefSeq" id="YP_319811.1">
    <property type="nucleotide sequence ID" value="NC_007407.1"/>
</dbReference>
<dbReference type="SMR" id="Q3V4Y6"/>
<dbReference type="GeneID" id="3677446"/>
<dbReference type="GO" id="GO:0009507">
    <property type="term" value="C:chloroplast"/>
    <property type="evidence" value="ECO:0007669"/>
    <property type="project" value="UniProtKB-SubCell"/>
</dbReference>
<dbReference type="GO" id="GO:0015934">
    <property type="term" value="C:large ribosomal subunit"/>
    <property type="evidence" value="ECO:0007669"/>
    <property type="project" value="InterPro"/>
</dbReference>
<dbReference type="GO" id="GO:0003735">
    <property type="term" value="F:structural constituent of ribosome"/>
    <property type="evidence" value="ECO:0007669"/>
    <property type="project" value="InterPro"/>
</dbReference>
<dbReference type="GO" id="GO:0006412">
    <property type="term" value="P:translation"/>
    <property type="evidence" value="ECO:0007669"/>
    <property type="project" value="UniProtKB-UniRule"/>
</dbReference>
<dbReference type="HAMAP" id="MF_00340">
    <property type="entry name" value="Ribosomal_bL32"/>
    <property type="match status" value="1"/>
</dbReference>
<dbReference type="InterPro" id="IPR002677">
    <property type="entry name" value="Ribosomal_bL32"/>
</dbReference>
<dbReference type="InterPro" id="IPR044958">
    <property type="entry name" value="Ribosomal_bL32_plant/cyanobact"/>
</dbReference>
<dbReference type="InterPro" id="IPR011332">
    <property type="entry name" value="Ribosomal_zn-bd"/>
</dbReference>
<dbReference type="PANTHER" id="PTHR36083">
    <property type="entry name" value="50S RIBOSOMAL PROTEIN L32, CHLOROPLASTIC"/>
    <property type="match status" value="1"/>
</dbReference>
<dbReference type="PANTHER" id="PTHR36083:SF1">
    <property type="entry name" value="LARGE RIBOSOMAL SUBUNIT PROTEIN BL32C"/>
    <property type="match status" value="1"/>
</dbReference>
<dbReference type="Pfam" id="PF01783">
    <property type="entry name" value="Ribosomal_L32p"/>
    <property type="match status" value="1"/>
</dbReference>
<dbReference type="SUPFAM" id="SSF57829">
    <property type="entry name" value="Zn-binding ribosomal proteins"/>
    <property type="match status" value="1"/>
</dbReference>